<gene>
    <name evidence="1" type="primary">hisA</name>
    <name type="ordered locus">PputW619_4916</name>
</gene>
<reference key="1">
    <citation type="submission" date="2008-02" db="EMBL/GenBank/DDBJ databases">
        <title>Complete sequence of Pseudomonas putida W619.</title>
        <authorList>
            <person name="Copeland A."/>
            <person name="Lucas S."/>
            <person name="Lapidus A."/>
            <person name="Barry K."/>
            <person name="Detter J.C."/>
            <person name="Glavina del Rio T."/>
            <person name="Dalin E."/>
            <person name="Tice H."/>
            <person name="Pitluck S."/>
            <person name="Chain P."/>
            <person name="Malfatti S."/>
            <person name="Shin M."/>
            <person name="Vergez L."/>
            <person name="Schmutz J."/>
            <person name="Larimer F."/>
            <person name="Land M."/>
            <person name="Hauser L."/>
            <person name="Kyrpides N."/>
            <person name="Kim E."/>
            <person name="Taghavi S."/>
            <person name="Vangronsveld D."/>
            <person name="van der Lelie D."/>
            <person name="Richardson P."/>
        </authorList>
    </citation>
    <scope>NUCLEOTIDE SEQUENCE [LARGE SCALE GENOMIC DNA]</scope>
    <source>
        <strain>W619</strain>
    </source>
</reference>
<evidence type="ECO:0000255" key="1">
    <source>
        <dbReference type="HAMAP-Rule" id="MF_01014"/>
    </source>
</evidence>
<protein>
    <recommendedName>
        <fullName evidence="1">1-(5-phosphoribosyl)-5-[(5-phosphoribosylamino)methylideneamino] imidazole-4-carboxamide isomerase</fullName>
        <ecNumber evidence="1">5.3.1.16</ecNumber>
    </recommendedName>
    <alternativeName>
        <fullName evidence="1">Phosphoribosylformimino-5-aminoimidazole carboxamide ribotide isomerase</fullName>
    </alternativeName>
</protein>
<accession>B1JED2</accession>
<organism>
    <name type="scientific">Pseudomonas putida (strain W619)</name>
    <dbReference type="NCBI Taxonomy" id="390235"/>
    <lineage>
        <taxon>Bacteria</taxon>
        <taxon>Pseudomonadati</taxon>
        <taxon>Pseudomonadota</taxon>
        <taxon>Gammaproteobacteria</taxon>
        <taxon>Pseudomonadales</taxon>
        <taxon>Pseudomonadaceae</taxon>
        <taxon>Pseudomonas</taxon>
    </lineage>
</organism>
<name>HIS4_PSEPW</name>
<proteinExistence type="inferred from homology"/>
<keyword id="KW-0028">Amino-acid biosynthesis</keyword>
<keyword id="KW-0963">Cytoplasm</keyword>
<keyword id="KW-0368">Histidine biosynthesis</keyword>
<keyword id="KW-0413">Isomerase</keyword>
<sequence>MLIIPAIDLKDGACVRLRQGRMEDSTVFSDDPVSMAAKWVEGGCRRLHLVDLNGAFEGQPVNGEVVTAIAKRYPNLPIQIGGGIRSLETIEHYVKAGVSYVIIGTKAVKQPEFVAEACKAFPGKVIVGLDAKDGFVATDGWAEVSSVQVIDLAKRFEADGVSAIVYTDIAKDGMMQGCNVPFTAALAAATSIPVIASGGIHNLGDIKTLLDAKAPGIVGAITGRAIYEGTLDVAEAQAFCDNYKG</sequence>
<dbReference type="EC" id="5.3.1.16" evidence="1"/>
<dbReference type="EMBL" id="CP000949">
    <property type="protein sequence ID" value="ACA75392.1"/>
    <property type="molecule type" value="Genomic_DNA"/>
</dbReference>
<dbReference type="SMR" id="B1JED2"/>
<dbReference type="STRING" id="390235.PputW619_4916"/>
<dbReference type="KEGG" id="ppw:PputW619_4916"/>
<dbReference type="eggNOG" id="COG0106">
    <property type="taxonomic scope" value="Bacteria"/>
</dbReference>
<dbReference type="HOGENOM" id="CLU_048577_1_1_6"/>
<dbReference type="OrthoDB" id="9807749at2"/>
<dbReference type="UniPathway" id="UPA00031">
    <property type="reaction ID" value="UER00009"/>
</dbReference>
<dbReference type="GO" id="GO:0005737">
    <property type="term" value="C:cytoplasm"/>
    <property type="evidence" value="ECO:0007669"/>
    <property type="project" value="UniProtKB-SubCell"/>
</dbReference>
<dbReference type="GO" id="GO:0003949">
    <property type="term" value="F:1-(5-phosphoribosyl)-5-[(5-phosphoribosylamino)methylideneamino]imidazole-4-carboxamide isomerase activity"/>
    <property type="evidence" value="ECO:0007669"/>
    <property type="project" value="UniProtKB-UniRule"/>
</dbReference>
<dbReference type="GO" id="GO:0000105">
    <property type="term" value="P:L-histidine biosynthetic process"/>
    <property type="evidence" value="ECO:0007669"/>
    <property type="project" value="UniProtKB-UniRule"/>
</dbReference>
<dbReference type="GO" id="GO:0000162">
    <property type="term" value="P:L-tryptophan biosynthetic process"/>
    <property type="evidence" value="ECO:0007669"/>
    <property type="project" value="TreeGrafter"/>
</dbReference>
<dbReference type="CDD" id="cd04732">
    <property type="entry name" value="HisA"/>
    <property type="match status" value="1"/>
</dbReference>
<dbReference type="FunFam" id="3.20.20.70:FF:000009">
    <property type="entry name" value="1-(5-phosphoribosyl)-5-[(5-phosphoribosylamino)methylideneamino] imidazole-4-carboxamide isomerase"/>
    <property type="match status" value="1"/>
</dbReference>
<dbReference type="Gene3D" id="3.20.20.70">
    <property type="entry name" value="Aldolase class I"/>
    <property type="match status" value="1"/>
</dbReference>
<dbReference type="HAMAP" id="MF_01014">
    <property type="entry name" value="HisA"/>
    <property type="match status" value="1"/>
</dbReference>
<dbReference type="InterPro" id="IPR013785">
    <property type="entry name" value="Aldolase_TIM"/>
</dbReference>
<dbReference type="InterPro" id="IPR006062">
    <property type="entry name" value="His_biosynth"/>
</dbReference>
<dbReference type="InterPro" id="IPR006063">
    <property type="entry name" value="HisA_bact_arch"/>
</dbReference>
<dbReference type="InterPro" id="IPR044524">
    <property type="entry name" value="Isoase_HisA-like"/>
</dbReference>
<dbReference type="InterPro" id="IPR023016">
    <property type="entry name" value="Isoase_HisA-like_bact"/>
</dbReference>
<dbReference type="InterPro" id="IPR011060">
    <property type="entry name" value="RibuloseP-bd_barrel"/>
</dbReference>
<dbReference type="NCBIfam" id="TIGR00007">
    <property type="entry name" value="1-(5-phosphoribosyl)-5-[(5-phosphoribosylamino)methylideneamino]imidazole-4-carboxamide isomerase"/>
    <property type="match status" value="1"/>
</dbReference>
<dbReference type="PANTHER" id="PTHR43090">
    <property type="entry name" value="1-(5-PHOSPHORIBOSYL)-5-[(5-PHOSPHORIBOSYLAMINO)METHYLIDENEAMINO] IMIDAZOLE-4-CARBOXAMIDE ISOMERASE"/>
    <property type="match status" value="1"/>
</dbReference>
<dbReference type="PANTHER" id="PTHR43090:SF2">
    <property type="entry name" value="1-(5-PHOSPHORIBOSYL)-5-[(5-PHOSPHORIBOSYLAMINO)METHYLIDENEAMINO] IMIDAZOLE-4-CARBOXAMIDE ISOMERASE"/>
    <property type="match status" value="1"/>
</dbReference>
<dbReference type="Pfam" id="PF00977">
    <property type="entry name" value="His_biosynth"/>
    <property type="match status" value="1"/>
</dbReference>
<dbReference type="SUPFAM" id="SSF51366">
    <property type="entry name" value="Ribulose-phoshate binding barrel"/>
    <property type="match status" value="1"/>
</dbReference>
<feature type="chain" id="PRO_1000135142" description="1-(5-phosphoribosyl)-5-[(5-phosphoribosylamino)methylideneamino] imidazole-4-carboxamide isomerase">
    <location>
        <begin position="1"/>
        <end position="245"/>
    </location>
</feature>
<feature type="active site" description="Proton acceptor" evidence="1">
    <location>
        <position position="8"/>
    </location>
</feature>
<feature type="active site" description="Proton donor" evidence="1">
    <location>
        <position position="130"/>
    </location>
</feature>
<comment type="catalytic activity">
    <reaction evidence="1">
        <text>1-(5-phospho-beta-D-ribosyl)-5-[(5-phospho-beta-D-ribosylamino)methylideneamino]imidazole-4-carboxamide = 5-[(5-phospho-1-deoxy-D-ribulos-1-ylimino)methylamino]-1-(5-phospho-beta-D-ribosyl)imidazole-4-carboxamide</text>
        <dbReference type="Rhea" id="RHEA:15469"/>
        <dbReference type="ChEBI" id="CHEBI:58435"/>
        <dbReference type="ChEBI" id="CHEBI:58525"/>
        <dbReference type="EC" id="5.3.1.16"/>
    </reaction>
</comment>
<comment type="pathway">
    <text evidence="1">Amino-acid biosynthesis; L-histidine biosynthesis; L-histidine from 5-phospho-alpha-D-ribose 1-diphosphate: step 4/9.</text>
</comment>
<comment type="subcellular location">
    <subcellularLocation>
        <location evidence="1">Cytoplasm</location>
    </subcellularLocation>
</comment>
<comment type="similarity">
    <text evidence="1">Belongs to the HisA/HisF family.</text>
</comment>